<comment type="function">
    <text evidence="1">Plays an essential role in transcription initiation and cap-stealing mechanism, in which cellular capped pre-mRNAs are used to generate primers for viral transcription. Recognizes and binds the 7-methylguanosine-containing cap of the target pre-RNA which is subsequently cleaved after 10-13 nucleotides by the viral protein PA. Plays a role in the initiation of the viral genome replication and modulates the activity of the ribonucleoprotein (RNP) complex.</text>
</comment>
<comment type="subunit">
    <text evidence="1">Influenza RNA polymerase is composed of three subunits: PB1, PB2 and PA. Interacts (via N-terminus) with PB1 (via C-terminus). Interacts with nucleoprotein NP (via N-terminus).</text>
</comment>
<comment type="subcellular location">
    <subcellularLocation>
        <location evidence="1">Virion</location>
    </subcellularLocation>
    <subcellularLocation>
        <location evidence="1">Host nucleus</location>
    </subcellularLocation>
</comment>
<comment type="miscellaneous">
    <text>SC35 was derived from A/Seal/Massachussetts/1/80 (H7N7) by serial passages in chicken embryo cells, thereby acquiring a multibasic cleavage site in its hemagglutinin (HA) and becoming 100% lethal for chickens. SC35 was then passaged 11 times in mouse lung, yielding the mouse-adapted variant SC35M.</text>
</comment>
<comment type="similarity">
    <text evidence="1">Belongs to the influenza viruses PB2 family.</text>
</comment>
<dbReference type="EMBL" id="DQ266097">
    <property type="protein sequence ID" value="ABB90270.1"/>
    <property type="molecule type" value="Genomic_RNA"/>
</dbReference>
<dbReference type="SMR" id="Q2VC93"/>
<dbReference type="PRO" id="PR:Q2VC93"/>
<dbReference type="Proteomes" id="UP000008576">
    <property type="component" value="Genome"/>
</dbReference>
<dbReference type="GO" id="GO:0042025">
    <property type="term" value="C:host cell nucleus"/>
    <property type="evidence" value="ECO:0007669"/>
    <property type="project" value="UniProtKB-SubCell"/>
</dbReference>
<dbReference type="GO" id="GO:0044423">
    <property type="term" value="C:virion component"/>
    <property type="evidence" value="ECO:0007669"/>
    <property type="project" value="UniProtKB-UniRule"/>
</dbReference>
<dbReference type="GO" id="GO:0003723">
    <property type="term" value="F:RNA binding"/>
    <property type="evidence" value="ECO:0007669"/>
    <property type="project" value="UniProtKB-UniRule"/>
</dbReference>
<dbReference type="GO" id="GO:0003968">
    <property type="term" value="F:RNA-directed RNA polymerase activity"/>
    <property type="evidence" value="ECO:0007669"/>
    <property type="project" value="UniProtKB-UniRule"/>
</dbReference>
<dbReference type="GO" id="GO:0006370">
    <property type="term" value="P:7-methylguanosine mRNA capping"/>
    <property type="evidence" value="ECO:0007669"/>
    <property type="project" value="UniProtKB-UniRule"/>
</dbReference>
<dbReference type="GO" id="GO:0075526">
    <property type="term" value="P:cap snatching"/>
    <property type="evidence" value="ECO:0007669"/>
    <property type="project" value="UniProtKB-UniRule"/>
</dbReference>
<dbReference type="GO" id="GO:0006351">
    <property type="term" value="P:DNA-templated transcription"/>
    <property type="evidence" value="ECO:0007669"/>
    <property type="project" value="UniProtKB-UniRule"/>
</dbReference>
<dbReference type="GO" id="GO:0039657">
    <property type="term" value="P:symbiont-mediated suppression of host gene expression"/>
    <property type="evidence" value="ECO:0007669"/>
    <property type="project" value="UniProtKB-KW"/>
</dbReference>
<dbReference type="GO" id="GO:0039523">
    <property type="term" value="P:symbiont-mediated suppression of host mRNA transcription via inhibition of RNA polymerase II activity"/>
    <property type="evidence" value="ECO:0007669"/>
    <property type="project" value="UniProtKB-UniRule"/>
</dbReference>
<dbReference type="GO" id="GO:0039694">
    <property type="term" value="P:viral RNA genome replication"/>
    <property type="evidence" value="ECO:0007669"/>
    <property type="project" value="InterPro"/>
</dbReference>
<dbReference type="FunFam" id="3.30.30.90:FF:000001">
    <property type="entry name" value="Polymerase basic protein 2"/>
    <property type="match status" value="1"/>
</dbReference>
<dbReference type="Gene3D" id="3.30.30.90">
    <property type="entry name" value="Polymerase Basic Protein 2, C-terminal domain"/>
    <property type="match status" value="1"/>
</dbReference>
<dbReference type="HAMAP" id="MF_04062">
    <property type="entry name" value="INV_PB2"/>
    <property type="match status" value="1"/>
</dbReference>
<dbReference type="InterPro" id="IPR049110">
    <property type="entry name" value="Flu_PB2_2nd"/>
</dbReference>
<dbReference type="InterPro" id="IPR049114">
    <property type="entry name" value="Flu_PB2_6th"/>
</dbReference>
<dbReference type="InterPro" id="IPR049115">
    <property type="entry name" value="Flu_PB2_C"/>
</dbReference>
<dbReference type="InterPro" id="IPR048298">
    <property type="entry name" value="Flu_PB2_CAP-bd"/>
</dbReference>
<dbReference type="InterPro" id="IPR049111">
    <property type="entry name" value="Flu_PB2_middle"/>
</dbReference>
<dbReference type="InterPro" id="IPR049106">
    <property type="entry name" value="Flu_PB2_N"/>
</dbReference>
<dbReference type="InterPro" id="IPR001591">
    <property type="entry name" value="INV_PB2"/>
</dbReference>
<dbReference type="InterPro" id="IPR049113">
    <property type="entry name" value="PB2_helical"/>
</dbReference>
<dbReference type="InterPro" id="IPR037258">
    <property type="entry name" value="PDB2_C"/>
</dbReference>
<dbReference type="Pfam" id="PF20947">
    <property type="entry name" value="Flu_PB2_1st"/>
    <property type="match status" value="1"/>
</dbReference>
<dbReference type="Pfam" id="PF20948">
    <property type="entry name" value="Flu_PB2_2nd"/>
    <property type="match status" value="1"/>
</dbReference>
<dbReference type="Pfam" id="PF20949">
    <property type="entry name" value="Flu_PB2_3rd"/>
    <property type="match status" value="1"/>
</dbReference>
<dbReference type="Pfam" id="PF20950">
    <property type="entry name" value="Flu_PB2_4th"/>
    <property type="match status" value="1"/>
</dbReference>
<dbReference type="Pfam" id="PF00604">
    <property type="entry name" value="Flu_PB2_5th"/>
    <property type="match status" value="1"/>
</dbReference>
<dbReference type="Pfam" id="PF20951">
    <property type="entry name" value="Flu_PB2_6th"/>
    <property type="match status" value="1"/>
</dbReference>
<dbReference type="Pfam" id="PF20952">
    <property type="entry name" value="Flu_PB2_7th"/>
    <property type="match status" value="1"/>
</dbReference>
<dbReference type="SUPFAM" id="SSF160453">
    <property type="entry name" value="PB2 C-terminal domain-like"/>
    <property type="match status" value="1"/>
</dbReference>
<feature type="chain" id="PRO_0000279646" description="Polymerase basic protein 2">
    <location>
        <begin position="1"/>
        <end position="759"/>
    </location>
</feature>
<feature type="short sequence motif" description="Nuclear localization signal" evidence="1">
    <location>
        <begin position="736"/>
        <end position="739"/>
    </location>
</feature>
<feature type="site" description="Avian adaptation" evidence="1">
    <location>
        <position position="627"/>
    </location>
</feature>
<name>PB2_I80A2</name>
<sequence>MERIKELRDLMSQSRTREILTKTTVDHMAIIKKYTSGRQEKNPALRMKWMMAMKYPITADKRIMEMIPERNEQGQTLWSKTNDAGSDRVMVSPLAVTWWNRNGPTTSTVHYPKVYKTYFEKVERMKHGTFGPVHFRNQVKIRRRVDINPGHADLSAKEAQDVIMEVVFPNEVGARILTSESQLTITKEKKEKLQDCKIAPLMVAYMLERELVRKTRFLPVAGGTSSVYIEVLHLTQGTCWEQMYTPGGEVRNDDIDQSLIIAARNIVRRATVSADPLASLLEMCHSTQIGGIRMVDILRQNPTEEQAVDICKAAMGLRISSSFSFGGFTFKRISGSSVKREEEVLTGNLQTLKIRVHEGYEEFTMVGRRATAILRKATRRLIQLIVSGRDEQSIAEAIIVAMVFSQEDCMIKAVRGDLNFVNRANQRLNPMHQLLRHFQKDAKVLFQNWGIEPIDNVMGMIGILPDMTPSTEMSLRGIRVSKMGVDEYSSTERVVVSIDRFLRVRDQRGNVLLSPEEVSETQGTEKLTITYSSSMMWEINGPESVLINTYQWIIRNWETVKIQWSQDPTMLYNKMEFEPFQSLVPKAARGQYSGFVRTLFQQMRDVLGTFDTVQIIKLLPFAAAPPEQSRMQFSSLTVNVRGSGMRILIRGNSPVFNYNKATKRLTVLGKDAGALTEDPDEGTAGVESAVLRGFLILGKENKRYGPALSINELRNLAKGEKANVLIGQGDVVLVMKRKRDSSILTDSQTATKRIRMAIN</sequence>
<reference key="1">
    <citation type="journal article" date="2005" name="Proc. Natl. Acad. Sci. U.S.A.">
        <title>The viral polymerase mediates adaptation of an avian influenza virus to a mammalian host.</title>
        <authorList>
            <person name="Gabriel G."/>
            <person name="Dauber B."/>
            <person name="Wolff T."/>
            <person name="Planz O."/>
            <person name="Klenk H.D."/>
            <person name="Stech J."/>
        </authorList>
    </citation>
    <scope>NUCLEOTIDE SEQUENCE [GENOMIC RNA]</scope>
    <source>
        <strain>SC35M mouse-adapted</strain>
    </source>
</reference>
<organismHost>
    <name type="scientific">Aves</name>
    <dbReference type="NCBI Taxonomy" id="8782"/>
</organismHost>
<organismHost>
    <name type="scientific">Equus caballus</name>
    <name type="common">Horse</name>
    <dbReference type="NCBI Taxonomy" id="9796"/>
</organismHost>
<organismHost>
    <name type="scientific">Homo sapiens</name>
    <name type="common">Human</name>
    <dbReference type="NCBI Taxonomy" id="9606"/>
</organismHost>
<organismHost>
    <name type="scientific">Phocidae</name>
    <name type="common">true seals</name>
    <dbReference type="NCBI Taxonomy" id="9709"/>
</organismHost>
<evidence type="ECO:0000255" key="1">
    <source>
        <dbReference type="HAMAP-Rule" id="MF_04062"/>
    </source>
</evidence>
<gene>
    <name evidence="1" type="primary">PB2</name>
</gene>
<accession>Q2VC93</accession>
<proteinExistence type="inferred from homology"/>
<organism>
    <name type="scientific">Influenza A virus (strain A/Seal/Massachusetts/1/1980 H7N7)</name>
    <dbReference type="NCBI Taxonomy" id="384493"/>
    <lineage>
        <taxon>Viruses</taxon>
        <taxon>Riboviria</taxon>
        <taxon>Orthornavirae</taxon>
        <taxon>Negarnaviricota</taxon>
        <taxon>Polyploviricotina</taxon>
        <taxon>Insthoviricetes</taxon>
        <taxon>Articulavirales</taxon>
        <taxon>Orthomyxoviridae</taxon>
        <taxon>Alphainfluenzavirus</taxon>
        <taxon>Alphainfluenzavirus influenzae</taxon>
        <taxon>Influenza A virus</taxon>
    </lineage>
</organism>
<keyword id="KW-1157">Cap snatching</keyword>
<keyword id="KW-1262">Eukaryotic host gene expression shutoff by virus</keyword>
<keyword id="KW-1191">Eukaryotic host transcription shutoff by virus</keyword>
<keyword id="KW-1190">Host gene expression shutoff by virus</keyword>
<keyword id="KW-1048">Host nucleus</keyword>
<keyword id="KW-0945">Host-virus interaction</keyword>
<keyword id="KW-1104">Inhibition of host RNA polymerase II by virus</keyword>
<keyword id="KW-0506">mRNA capping</keyword>
<keyword id="KW-0507">mRNA processing</keyword>
<keyword id="KW-1195">Viral transcription</keyword>
<keyword id="KW-0946">Virion</keyword>
<protein>
    <recommendedName>
        <fullName evidence="1">Polymerase basic protein 2</fullName>
    </recommendedName>
    <alternativeName>
        <fullName evidence="1">RNA-directed RNA polymerase subunit P3</fullName>
    </alternativeName>
</protein>